<reference key="1">
    <citation type="submission" date="2005-07" db="EMBL/GenBank/DDBJ databases">
        <authorList>
            <consortium name="NIH - Xenopus Gene Collection (XGC) project"/>
        </authorList>
    </citation>
    <scope>NUCLEOTIDE SEQUENCE [LARGE SCALE MRNA]</scope>
    <source>
        <tissue>Oocyte</tissue>
    </source>
</reference>
<dbReference type="EMBL" id="BC098994">
    <property type="protein sequence ID" value="AAH98994.1"/>
    <property type="molecule type" value="mRNA"/>
</dbReference>
<dbReference type="RefSeq" id="NP_001089578.1">
    <property type="nucleotide sequence ID" value="NM_001096109.1"/>
</dbReference>
<dbReference type="DNASU" id="734634"/>
<dbReference type="GeneID" id="734634"/>
<dbReference type="KEGG" id="xla:734634"/>
<dbReference type="AGR" id="Xenbase:XB-GENE-6255585"/>
<dbReference type="CTD" id="734634"/>
<dbReference type="Xenbase" id="XB-GENE-6255585">
    <property type="gene designation" value="dennd11.L"/>
</dbReference>
<dbReference type="OrthoDB" id="2152680at2759"/>
<dbReference type="Proteomes" id="UP000186698">
    <property type="component" value="Chromosome 3L"/>
</dbReference>
<dbReference type="Bgee" id="734634">
    <property type="expression patterns" value="Expressed in neurula embryo and 19 other cell types or tissues"/>
</dbReference>
<dbReference type="GO" id="GO:0005737">
    <property type="term" value="C:cytoplasm"/>
    <property type="evidence" value="ECO:0000318"/>
    <property type="project" value="GO_Central"/>
</dbReference>
<dbReference type="GO" id="GO:0005085">
    <property type="term" value="F:guanyl-nucleotide exchange factor activity"/>
    <property type="evidence" value="ECO:0007669"/>
    <property type="project" value="UniProtKB-KW"/>
</dbReference>
<dbReference type="InterPro" id="IPR051731">
    <property type="entry name" value="DENND11/AVL9_GEFs"/>
</dbReference>
<dbReference type="InterPro" id="IPR018626">
    <property type="entry name" value="LCHN/Anr2"/>
</dbReference>
<dbReference type="InterPro" id="IPR037516">
    <property type="entry name" value="Tripartite_DENN"/>
</dbReference>
<dbReference type="PANTHER" id="PTHR31017:SF2">
    <property type="entry name" value="DENN DOMAIN-CONTAINING PROTEIN 11"/>
    <property type="match status" value="1"/>
</dbReference>
<dbReference type="PANTHER" id="PTHR31017">
    <property type="entry name" value="LATE SECRETORY PATHWAY PROTEIN AVL9-RELATED"/>
    <property type="match status" value="1"/>
</dbReference>
<dbReference type="Pfam" id="PF09804">
    <property type="entry name" value="DENND11"/>
    <property type="match status" value="1"/>
</dbReference>
<dbReference type="PROSITE" id="PS50211">
    <property type="entry name" value="DENN"/>
    <property type="match status" value="1"/>
</dbReference>
<sequence>MARRTDRAPLLDWAEGPGVSPAPETEQGERWAQGYGAAWERRPAGELTPLPQLEDDHIAAVFVVTFDPRSGNIVEWCRPHDIDLEGVEFKSMASGSHRVQSDFIYFRKGGFFGLACFANMPVESELERGARMKSVGVLSPSYTLLYRYMHFLENQVRHQLEIPGHYTPLEAFYEDKKGVLPVGPQTCQPALHWLPPVHKHLYPEMKITHPAGCMSQFIKFFGEQIFVLWKFALLRKRILIFSPPPVGVVCYRVYCCCCLANVTLPGIGATAPESKPFFYVNVADIQTLDGEGSYVACTTEKIFEQKQDLYDVYVDNQNVKTHREHLQPLLRVNSADKEKYQRLNDQRQLLMYSQEVDGDCGSCEEDLFILFFMEQNNRIFQTLLEVASSQDKTLTAEHARSMGLDPHGDRTFLMDLLEVYGFDLMLVIDNPCCP</sequence>
<organism>
    <name type="scientific">Xenopus laevis</name>
    <name type="common">African clawed frog</name>
    <dbReference type="NCBI Taxonomy" id="8355"/>
    <lineage>
        <taxon>Eukaryota</taxon>
        <taxon>Metazoa</taxon>
        <taxon>Chordata</taxon>
        <taxon>Craniata</taxon>
        <taxon>Vertebrata</taxon>
        <taxon>Euteleostomi</taxon>
        <taxon>Amphibia</taxon>
        <taxon>Batrachia</taxon>
        <taxon>Anura</taxon>
        <taxon>Pipoidea</taxon>
        <taxon>Pipidae</taxon>
        <taxon>Xenopodinae</taxon>
        <taxon>Xenopus</taxon>
        <taxon>Xenopus</taxon>
    </lineage>
</organism>
<gene>
    <name type="primary">dennd11</name>
    <name type="synonym">lchn</name>
</gene>
<name>DEN11_XENLA</name>
<evidence type="ECO:0000255" key="1">
    <source>
        <dbReference type="PROSITE-ProRule" id="PRU00304"/>
    </source>
</evidence>
<evidence type="ECO:0000256" key="2">
    <source>
        <dbReference type="SAM" id="MobiDB-lite"/>
    </source>
</evidence>
<evidence type="ECO:0000305" key="3"/>
<accession>Q4FZX0</accession>
<protein>
    <recommendedName>
        <fullName evidence="3">DENN domain-containing protein 11</fullName>
        <shortName>DENND11</shortName>
    </recommendedName>
    <alternativeName>
        <fullName>Protein LCHN</fullName>
    </alternativeName>
</protein>
<feature type="chain" id="PRO_0000315225" description="DENN domain-containing protein 11">
    <location>
        <begin position="1"/>
        <end position="434"/>
    </location>
</feature>
<feature type="domain" description="uDENN" evidence="1">
    <location>
        <begin position="1"/>
        <end position="168"/>
    </location>
</feature>
<feature type="domain" description="cDENN" evidence="1">
    <location>
        <begin position="194"/>
        <end position="341"/>
    </location>
</feature>
<feature type="domain" description="dDENN" evidence="1">
    <location>
        <begin position="343"/>
        <end position="434"/>
    </location>
</feature>
<feature type="region of interest" description="Disordered" evidence="2">
    <location>
        <begin position="1"/>
        <end position="29"/>
    </location>
</feature>
<keyword id="KW-0344">Guanine-nucleotide releasing factor</keyword>
<keyword id="KW-1185">Reference proteome</keyword>
<proteinExistence type="evidence at transcript level"/>
<comment type="function">
    <text evidence="3">Probable guanine nucleotide exchange factor (GEF). May promote the exchange of GDP to GTP, converting inactive GDP-bound small GTPases into their active GTP-bound form.</text>
</comment>
<comment type="similarity">
    <text evidence="3">Belongs to the DENND11 family.</text>
</comment>